<reference key="1">
    <citation type="journal article" date="2001" name="Nature">
        <title>Massive gene decay in the leprosy bacillus.</title>
        <authorList>
            <person name="Cole S.T."/>
            <person name="Eiglmeier K."/>
            <person name="Parkhill J."/>
            <person name="James K.D."/>
            <person name="Thomson N.R."/>
            <person name="Wheeler P.R."/>
            <person name="Honore N."/>
            <person name="Garnier T."/>
            <person name="Churcher C.M."/>
            <person name="Harris D.E."/>
            <person name="Mungall K.L."/>
            <person name="Basham D."/>
            <person name="Brown D."/>
            <person name="Chillingworth T."/>
            <person name="Connor R."/>
            <person name="Davies R.M."/>
            <person name="Devlin K."/>
            <person name="Duthoy S."/>
            <person name="Feltwell T."/>
            <person name="Fraser A."/>
            <person name="Hamlin N."/>
            <person name="Holroyd S."/>
            <person name="Hornsby T."/>
            <person name="Jagels K."/>
            <person name="Lacroix C."/>
            <person name="Maclean J."/>
            <person name="Moule S."/>
            <person name="Murphy L.D."/>
            <person name="Oliver K."/>
            <person name="Quail M.A."/>
            <person name="Rajandream M.A."/>
            <person name="Rutherford K.M."/>
            <person name="Rutter S."/>
            <person name="Seeger K."/>
            <person name="Simon S."/>
            <person name="Simmonds M."/>
            <person name="Skelton J."/>
            <person name="Squares R."/>
            <person name="Squares S."/>
            <person name="Stevens K."/>
            <person name="Taylor K."/>
            <person name="Whitehead S."/>
            <person name="Woodward J.R."/>
            <person name="Barrell B.G."/>
        </authorList>
    </citation>
    <scope>NUCLEOTIDE SEQUENCE [LARGE SCALE GENOMIC DNA]</scope>
    <source>
        <strain>TN</strain>
    </source>
</reference>
<keyword id="KW-0324">Glycolysis</keyword>
<keyword id="KW-0456">Lyase</keyword>
<keyword id="KW-0479">Metal-binding</keyword>
<keyword id="KW-1185">Reference proteome</keyword>
<keyword id="KW-0862">Zinc</keyword>
<accession>O69600</accession>
<gene>
    <name type="primary">fba</name>
    <name type="ordered locus">ML0286</name>
    <name type="ORF">MLCB4.29c</name>
</gene>
<feature type="chain" id="PRO_0000178721" description="Fructose-bisphosphate aldolase">
    <location>
        <begin position="1"/>
        <end position="345"/>
    </location>
</feature>
<feature type="active site" description="Proton donor" evidence="1">
    <location>
        <position position="95"/>
    </location>
</feature>
<feature type="binding site" evidence="1">
    <location>
        <position position="53"/>
    </location>
    <ligand>
        <name>D-glyceraldehyde 3-phosphate</name>
        <dbReference type="ChEBI" id="CHEBI:59776"/>
    </ligand>
</feature>
<feature type="binding site" evidence="1">
    <location>
        <position position="96"/>
    </location>
    <ligand>
        <name>Zn(2+)</name>
        <dbReference type="ChEBI" id="CHEBI:29105"/>
        <label>1</label>
        <note>catalytic</note>
    </ligand>
</feature>
<feature type="binding site" evidence="1">
    <location>
        <position position="131"/>
    </location>
    <ligand>
        <name>Zn(2+)</name>
        <dbReference type="ChEBI" id="CHEBI:29105"/>
        <label>2</label>
    </ligand>
</feature>
<feature type="binding site" evidence="1">
    <location>
        <position position="161"/>
    </location>
    <ligand>
        <name>Zn(2+)</name>
        <dbReference type="ChEBI" id="CHEBI:29105"/>
        <label>2</label>
    </ligand>
</feature>
<feature type="binding site" evidence="1">
    <location>
        <position position="212"/>
    </location>
    <ligand>
        <name>Zn(2+)</name>
        <dbReference type="ChEBI" id="CHEBI:29105"/>
        <label>1</label>
        <note>catalytic</note>
    </ligand>
</feature>
<feature type="binding site" evidence="1">
    <location>
        <position position="213"/>
    </location>
    <ligand>
        <name>dihydroxyacetone phosphate</name>
        <dbReference type="ChEBI" id="CHEBI:57642"/>
    </ligand>
</feature>
<feature type="binding site" evidence="1">
    <location>
        <position position="252"/>
    </location>
    <ligand>
        <name>Zn(2+)</name>
        <dbReference type="ChEBI" id="CHEBI:29105"/>
        <label>1</label>
        <note>catalytic</note>
    </ligand>
</feature>
<feature type="binding site" evidence="1">
    <location>
        <begin position="253"/>
        <end position="255"/>
    </location>
    <ligand>
        <name>dihydroxyacetone phosphate</name>
        <dbReference type="ChEBI" id="CHEBI:57642"/>
    </ligand>
</feature>
<feature type="binding site" evidence="1">
    <location>
        <begin position="274"/>
        <end position="277"/>
    </location>
    <ligand>
        <name>dihydroxyacetone phosphate</name>
        <dbReference type="ChEBI" id="CHEBI:57642"/>
    </ligand>
</feature>
<comment type="function">
    <text evidence="1">Catalyzes the aldol condensation of dihydroxyacetone phosphate (DHAP or glycerone-phosphate) with glyceraldehyde 3-phosphate (G3P) to form fructose 1,6-bisphosphate (FBP) in gluconeogenesis and the reverse reaction in glycolysis.</text>
</comment>
<comment type="catalytic activity">
    <reaction>
        <text>beta-D-fructose 1,6-bisphosphate = D-glyceraldehyde 3-phosphate + dihydroxyacetone phosphate</text>
        <dbReference type="Rhea" id="RHEA:14729"/>
        <dbReference type="ChEBI" id="CHEBI:32966"/>
        <dbReference type="ChEBI" id="CHEBI:57642"/>
        <dbReference type="ChEBI" id="CHEBI:59776"/>
        <dbReference type="EC" id="4.1.2.13"/>
    </reaction>
</comment>
<comment type="cofactor">
    <cofactor evidence="1">
        <name>Zn(2+)</name>
        <dbReference type="ChEBI" id="CHEBI:29105"/>
    </cofactor>
    <text evidence="1">Binds 2 Zn(2+) ions per subunit. One is catalytic and the other provides a structural contribution.</text>
</comment>
<comment type="pathway">
    <text>Carbohydrate degradation; glycolysis; D-glyceraldehyde 3-phosphate and glycerone phosphate from D-glucose: step 4/4.</text>
</comment>
<comment type="similarity">
    <text evidence="2">Belongs to the class II fructose-bisphosphate aldolase family.</text>
</comment>
<evidence type="ECO:0000250" key="1"/>
<evidence type="ECO:0000305" key="2"/>
<proteinExistence type="inferred from homology"/>
<dbReference type="EC" id="4.1.2.13"/>
<dbReference type="EMBL" id="AL023514">
    <property type="protein sequence ID" value="CAA18950.1"/>
    <property type="molecule type" value="Genomic_DNA"/>
</dbReference>
<dbReference type="EMBL" id="AL583918">
    <property type="protein sequence ID" value="CAC29794.1"/>
    <property type="molecule type" value="Genomic_DNA"/>
</dbReference>
<dbReference type="PIR" id="F86944">
    <property type="entry name" value="F86944"/>
</dbReference>
<dbReference type="RefSeq" id="NP_301326.1">
    <property type="nucleotide sequence ID" value="NC_002677.1"/>
</dbReference>
<dbReference type="SMR" id="O69600"/>
<dbReference type="STRING" id="272631.gene:17574105"/>
<dbReference type="KEGG" id="mle:ML0286"/>
<dbReference type="PATRIC" id="fig|272631.5.peg.450"/>
<dbReference type="Leproma" id="ML0286"/>
<dbReference type="eggNOG" id="COG0191">
    <property type="taxonomic scope" value="Bacteria"/>
</dbReference>
<dbReference type="HOGENOM" id="CLU_036923_1_0_11"/>
<dbReference type="OrthoDB" id="9803995at2"/>
<dbReference type="UniPathway" id="UPA00109">
    <property type="reaction ID" value="UER00183"/>
</dbReference>
<dbReference type="Proteomes" id="UP000000806">
    <property type="component" value="Chromosome"/>
</dbReference>
<dbReference type="GO" id="GO:0005829">
    <property type="term" value="C:cytosol"/>
    <property type="evidence" value="ECO:0007669"/>
    <property type="project" value="TreeGrafter"/>
</dbReference>
<dbReference type="GO" id="GO:0004332">
    <property type="term" value="F:fructose-bisphosphate aldolase activity"/>
    <property type="evidence" value="ECO:0007669"/>
    <property type="project" value="UniProtKB-EC"/>
</dbReference>
<dbReference type="GO" id="GO:0008270">
    <property type="term" value="F:zinc ion binding"/>
    <property type="evidence" value="ECO:0007669"/>
    <property type="project" value="InterPro"/>
</dbReference>
<dbReference type="GO" id="GO:0006096">
    <property type="term" value="P:glycolytic process"/>
    <property type="evidence" value="ECO:0007669"/>
    <property type="project" value="UniProtKB-UniPathway"/>
</dbReference>
<dbReference type="FunFam" id="3.20.20.70:FF:000112">
    <property type="entry name" value="Fructose-bisphosphate aldolase Fba"/>
    <property type="match status" value="1"/>
</dbReference>
<dbReference type="Gene3D" id="3.20.20.70">
    <property type="entry name" value="Aldolase class I"/>
    <property type="match status" value="1"/>
</dbReference>
<dbReference type="InterPro" id="IPR013785">
    <property type="entry name" value="Aldolase_TIM"/>
</dbReference>
<dbReference type="InterPro" id="IPR000771">
    <property type="entry name" value="FBA_II"/>
</dbReference>
<dbReference type="InterPro" id="IPR006411">
    <property type="entry name" value="Fruct_bisP_bact"/>
</dbReference>
<dbReference type="NCBIfam" id="TIGR00167">
    <property type="entry name" value="cbbA"/>
    <property type="match status" value="1"/>
</dbReference>
<dbReference type="NCBIfam" id="TIGR01520">
    <property type="entry name" value="FruBisAldo_II_A"/>
    <property type="match status" value="1"/>
</dbReference>
<dbReference type="NCBIfam" id="NF006628">
    <property type="entry name" value="PRK09197.1"/>
    <property type="match status" value="1"/>
</dbReference>
<dbReference type="PANTHER" id="PTHR30559:SF0">
    <property type="entry name" value="FRUCTOSE-BISPHOSPHATE ALDOLASE"/>
    <property type="match status" value="1"/>
</dbReference>
<dbReference type="PANTHER" id="PTHR30559">
    <property type="entry name" value="FRUCTOSE-BISPHOSPHATE ALDOLASE CLASS 2"/>
    <property type="match status" value="1"/>
</dbReference>
<dbReference type="Pfam" id="PF01116">
    <property type="entry name" value="F_bP_aldolase"/>
    <property type="match status" value="1"/>
</dbReference>
<dbReference type="PIRSF" id="PIRSF001359">
    <property type="entry name" value="F_bP_aldolase_II"/>
    <property type="match status" value="1"/>
</dbReference>
<dbReference type="SUPFAM" id="SSF51569">
    <property type="entry name" value="Aldolase"/>
    <property type="match status" value="1"/>
</dbReference>
<dbReference type="PROSITE" id="PS00602">
    <property type="entry name" value="ALDOLASE_CLASS_II_1"/>
    <property type="match status" value="1"/>
</dbReference>
<dbReference type="PROSITE" id="PS00806">
    <property type="entry name" value="ALDOLASE_CLASS_II_2"/>
    <property type="match status" value="1"/>
</dbReference>
<sequence length="345" mass="36741">MPIATPEIYAEMLRRAKENSYAFPAINCTSSETVNAAIKGFADAGSDGIIQFSTGGAEFASGLGVKDMVTGAVALAKFTHTIAAKYPINVALHTDHCPKDKLDSYVRPLLAISARRVATGKDPLFGSHMWDGSAIPIDENLAIAQDLLKDAAAAKIILEVEIGVVGGEEDGVAGEINEKLYTTPKDFVKTIDALGAGEHGKYLLAATFGNVHGVYKPGNVKLRPDILAEGQKVAAAKLSQSEGSKPFDFVFHGGSGSEKSEIEEALRYGVVKMNVDTDTQYAFTRPVSGHMFTNYDGVLKVDGDVGNKKVYDPRSYLKKAEASMTERVLEACNDLRCAGKSVAAS</sequence>
<protein>
    <recommendedName>
        <fullName>Fructose-bisphosphate aldolase</fullName>
        <shortName>FBP aldolase</shortName>
        <shortName>FBPA</shortName>
        <ecNumber>4.1.2.13</ecNumber>
    </recommendedName>
    <alternativeName>
        <fullName>Fructose-1,6-bisphosphate aldolase</fullName>
    </alternativeName>
</protein>
<name>ALF_MYCLE</name>
<organism>
    <name type="scientific">Mycobacterium leprae (strain TN)</name>
    <dbReference type="NCBI Taxonomy" id="272631"/>
    <lineage>
        <taxon>Bacteria</taxon>
        <taxon>Bacillati</taxon>
        <taxon>Actinomycetota</taxon>
        <taxon>Actinomycetes</taxon>
        <taxon>Mycobacteriales</taxon>
        <taxon>Mycobacteriaceae</taxon>
        <taxon>Mycobacterium</taxon>
    </lineage>
</organism>